<feature type="signal peptide" evidence="9">
    <location>
        <begin position="1"/>
        <end position="23"/>
    </location>
</feature>
<feature type="propeptide" id="PRO_0000440245" evidence="9">
    <location>
        <begin position="24"/>
        <end position="105"/>
    </location>
</feature>
<feature type="chain" id="PRO_5004328302" description="Pro-metalloprotease PrtV">
    <location>
        <begin position="106"/>
        <end position="834"/>
    </location>
</feature>
<feature type="chain" id="PRO_0000440246" description="37 kDa metalloprotease PrtV" evidence="4">
    <location>
        <begin position="106"/>
        <end position="434"/>
    </location>
</feature>
<feature type="chain" id="PRO_0000440247" description="18 kDa metalloprotease PrtV" evidence="9">
    <location>
        <begin position="587"/>
        <end position="749"/>
    </location>
</feature>
<feature type="propeptide" id="PRO_0000440248" evidence="9">
    <location>
        <begin position="835"/>
        <end position="918"/>
    </location>
</feature>
<feature type="domain" description="PKD 1" evidence="2">
    <location>
        <begin position="758"/>
        <end position="835"/>
    </location>
</feature>
<feature type="domain" description="PKD 2" evidence="2">
    <location>
        <begin position="855"/>
        <end position="918"/>
    </location>
</feature>
<feature type="active site" evidence="3">
    <location>
        <position position="331"/>
    </location>
</feature>
<feature type="binding site" evidence="3">
    <location>
        <position position="330"/>
    </location>
    <ligand>
        <name>Zn(2+)</name>
        <dbReference type="ChEBI" id="CHEBI:29105"/>
        <note>catalytic</note>
    </ligand>
</feature>
<feature type="binding site" evidence="3">
    <location>
        <position position="334"/>
    </location>
    <ligand>
        <name>Zn(2+)</name>
        <dbReference type="ChEBI" id="CHEBI:29105"/>
        <note>catalytic</note>
    </ligand>
</feature>
<feature type="binding site" evidence="1">
    <location>
        <position position="757"/>
    </location>
    <ligand>
        <name>Ca(2+)</name>
        <dbReference type="ChEBI" id="CHEBI:29108"/>
    </ligand>
</feature>
<feature type="binding site" evidence="1">
    <location>
        <position position="782"/>
    </location>
    <ligand>
        <name>Ca(2+)</name>
        <dbReference type="ChEBI" id="CHEBI:29108"/>
    </ligand>
</feature>
<feature type="binding site" evidence="1">
    <location>
        <position position="821"/>
    </location>
    <ligand>
        <name>Ca(2+)</name>
        <dbReference type="ChEBI" id="CHEBI:29108"/>
    </ligand>
</feature>
<feature type="binding site" evidence="1">
    <location>
        <position position="825"/>
    </location>
    <ligand>
        <name>Ca(2+)</name>
        <dbReference type="ChEBI" id="CHEBI:29108"/>
    </ligand>
</feature>
<feature type="helix" evidence="13">
    <location>
        <begin position="33"/>
        <end position="44"/>
    </location>
</feature>
<feature type="helix" evidence="13">
    <location>
        <begin position="53"/>
        <end position="66"/>
    </location>
</feature>
<feature type="helix" evidence="13">
    <location>
        <begin position="67"/>
        <end position="69"/>
    </location>
</feature>
<name>PRTV_VIBCH</name>
<keyword id="KW-0002">3D-structure</keyword>
<keyword id="KW-0068">Autocatalytic cleavage</keyword>
<keyword id="KW-0106">Calcium</keyword>
<keyword id="KW-0204">Cytolysis</keyword>
<keyword id="KW-0903">Direct protein sequencing</keyword>
<keyword id="KW-0378">Hydrolase</keyword>
<keyword id="KW-0479">Metal-binding</keyword>
<keyword id="KW-0482">Metalloprotease</keyword>
<keyword id="KW-0645">Protease</keyword>
<keyword id="KW-1185">Reference proteome</keyword>
<keyword id="KW-0677">Repeat</keyword>
<keyword id="KW-0964">Secreted</keyword>
<keyword id="KW-0732">Signal</keyword>
<keyword id="KW-0843">Virulence</keyword>
<keyword id="KW-0862">Zinc</keyword>
<protein>
    <recommendedName>
        <fullName evidence="6">Pre-pro-metalloprotease PrtV</fullName>
        <ecNumber evidence="8">3.4.24.-</ecNumber>
    </recommendedName>
    <component>
        <recommendedName>
            <fullName evidence="6">Pro-metalloprotease PrtV</fullName>
        </recommendedName>
    </component>
    <component>
        <recommendedName>
            <fullName evidence="6">37 kDa metalloprotease PrtV</fullName>
        </recommendedName>
    </component>
    <component>
        <recommendedName>
            <fullName evidence="6">18 kDa metalloprotease PrtV</fullName>
        </recommendedName>
    </component>
</protein>
<accession>Q9KMU6</accession>
<dbReference type="EC" id="3.4.24.-" evidence="8"/>
<dbReference type="EMBL" id="AE003853">
    <property type="protein sequence ID" value="AAF96135.1"/>
    <property type="molecule type" value="Genomic_DNA"/>
</dbReference>
<dbReference type="PIR" id="E82486">
    <property type="entry name" value="E82486"/>
</dbReference>
<dbReference type="RefSeq" id="NP_232622.1">
    <property type="nucleotide sequence ID" value="NC_002506.1"/>
</dbReference>
<dbReference type="RefSeq" id="WP_000848953.1">
    <property type="nucleotide sequence ID" value="NZ_LT906615.1"/>
</dbReference>
<dbReference type="PDB" id="5ABK">
    <property type="method" value="NMR"/>
    <property type="chains" value="A=23-103"/>
</dbReference>
<dbReference type="PDBsum" id="5ABK"/>
<dbReference type="BMRB" id="Q9KMU6"/>
<dbReference type="SMR" id="Q9KMU6"/>
<dbReference type="STRING" id="243277.VC_A0223"/>
<dbReference type="MEROPS" id="M06.002"/>
<dbReference type="EnsemblBacteria" id="AAF96135">
    <property type="protein sequence ID" value="AAF96135"/>
    <property type="gene ID" value="VC_A0223"/>
</dbReference>
<dbReference type="KEGG" id="vch:VC_A0223"/>
<dbReference type="PATRIC" id="fig|243277.26.peg.2856"/>
<dbReference type="eggNOG" id="COG3291">
    <property type="taxonomic scope" value="Bacteria"/>
</dbReference>
<dbReference type="eggNOG" id="COG4412">
    <property type="taxonomic scope" value="Bacteria"/>
</dbReference>
<dbReference type="HOGENOM" id="CLU_010858_1_0_6"/>
<dbReference type="EvolutionaryTrace" id="Q9KMU6"/>
<dbReference type="PHI-base" id="PHI:12210"/>
<dbReference type="Proteomes" id="UP000000584">
    <property type="component" value="Chromosome 2"/>
</dbReference>
<dbReference type="GO" id="GO:0005576">
    <property type="term" value="C:extracellular region"/>
    <property type="evidence" value="ECO:0007669"/>
    <property type="project" value="UniProtKB-SubCell"/>
</dbReference>
<dbReference type="GO" id="GO:0046872">
    <property type="term" value="F:metal ion binding"/>
    <property type="evidence" value="ECO:0007669"/>
    <property type="project" value="UniProtKB-KW"/>
</dbReference>
<dbReference type="GO" id="GO:0008237">
    <property type="term" value="F:metallopeptidase activity"/>
    <property type="evidence" value="ECO:0007669"/>
    <property type="project" value="UniProtKB-KW"/>
</dbReference>
<dbReference type="GO" id="GO:0031640">
    <property type="term" value="P:killing of cells of another organism"/>
    <property type="evidence" value="ECO:0007669"/>
    <property type="project" value="UniProtKB-KW"/>
</dbReference>
<dbReference type="GO" id="GO:0006508">
    <property type="term" value="P:proteolysis"/>
    <property type="evidence" value="ECO:0007669"/>
    <property type="project" value="UniProtKB-KW"/>
</dbReference>
<dbReference type="CDD" id="cd00146">
    <property type="entry name" value="PKD"/>
    <property type="match status" value="2"/>
</dbReference>
<dbReference type="Gene3D" id="2.60.40.10">
    <property type="entry name" value="Immunoglobulins"/>
    <property type="match status" value="2"/>
</dbReference>
<dbReference type="InterPro" id="IPR013783">
    <property type="entry name" value="Ig-like_fold"/>
</dbReference>
<dbReference type="InterPro" id="IPR048665">
    <property type="entry name" value="InhA-like_VEG"/>
</dbReference>
<dbReference type="InterPro" id="IPR012300">
    <property type="entry name" value="Pept_M6_InhA"/>
</dbReference>
<dbReference type="InterPro" id="IPR008757">
    <property type="entry name" value="Peptidase_M6-like_domain"/>
</dbReference>
<dbReference type="InterPro" id="IPR022409">
    <property type="entry name" value="PKD/Chitinase_dom"/>
</dbReference>
<dbReference type="InterPro" id="IPR000601">
    <property type="entry name" value="PKD_dom"/>
</dbReference>
<dbReference type="InterPro" id="IPR035986">
    <property type="entry name" value="PKD_dom_sf"/>
</dbReference>
<dbReference type="NCBIfam" id="TIGR03296">
    <property type="entry name" value="M6dom_TIGR03296"/>
    <property type="match status" value="1"/>
</dbReference>
<dbReference type="PANTHER" id="PTHR13062:SF12">
    <property type="entry name" value="ALPHA-2-MACROGLOBULIN DOMAIN-CONTAINING PROTEIN"/>
    <property type="match status" value="1"/>
</dbReference>
<dbReference type="PANTHER" id="PTHR13062">
    <property type="entry name" value="COLLAGENASE"/>
    <property type="match status" value="1"/>
</dbReference>
<dbReference type="Pfam" id="PF20773">
    <property type="entry name" value="InhA-like_MAM"/>
    <property type="match status" value="1"/>
</dbReference>
<dbReference type="Pfam" id="PF20774">
    <property type="entry name" value="InhA-like_VEG"/>
    <property type="match status" value="1"/>
</dbReference>
<dbReference type="Pfam" id="PF05547">
    <property type="entry name" value="Peptidase_M6"/>
    <property type="match status" value="1"/>
</dbReference>
<dbReference type="Pfam" id="PF00801">
    <property type="entry name" value="PKD"/>
    <property type="match status" value="1"/>
</dbReference>
<dbReference type="Pfam" id="PF18911">
    <property type="entry name" value="PKD_4"/>
    <property type="match status" value="1"/>
</dbReference>
<dbReference type="PIRSF" id="PIRSF007519">
    <property type="entry name" value="Protease_InhA"/>
    <property type="match status" value="1"/>
</dbReference>
<dbReference type="SMART" id="SM00089">
    <property type="entry name" value="PKD"/>
    <property type="match status" value="2"/>
</dbReference>
<dbReference type="SUPFAM" id="SSF55486">
    <property type="entry name" value="Metalloproteases ('zincins'), catalytic domain"/>
    <property type="match status" value="1"/>
</dbReference>
<dbReference type="SUPFAM" id="SSF49299">
    <property type="entry name" value="PKD domain"/>
    <property type="match status" value="2"/>
</dbReference>
<dbReference type="PROSITE" id="PS50093">
    <property type="entry name" value="PKD"/>
    <property type="match status" value="1"/>
</dbReference>
<organism>
    <name type="scientific">Vibrio cholerae serotype O1 (strain ATCC 39315 / El Tor Inaba N16961)</name>
    <dbReference type="NCBI Taxonomy" id="243277"/>
    <lineage>
        <taxon>Bacteria</taxon>
        <taxon>Pseudomonadati</taxon>
        <taxon>Pseudomonadota</taxon>
        <taxon>Gammaproteobacteria</taxon>
        <taxon>Vibrionales</taxon>
        <taxon>Vibrionaceae</taxon>
        <taxon>Vibrio</taxon>
    </lineage>
</organism>
<gene>
    <name evidence="7" type="primary">prtV</name>
    <name evidence="12" type="ordered locus">VC_A0223</name>
</gene>
<sequence>MKTIKKTLLAAAIASFFSSGLYAQTPIDLGVVNEDKLIEMLVRTGQIPADASDVDKRIALERYLEEKIRSGFKGDAQFGKKALEQRAKILKVIDKQKGPHKARVFALDVGQKRTDKVLALLIDFPDLPWDDNRLTKEHTEMLYDRYEPSHYQDLLFSDKGYTGPNGENFISMRQYYESESGNSYSVSGQAAGWYRASKNAAYYGGNSPGTNNDMNARELVREALDQLARDPNINLADYDIEDRYDYNGNGNFREPDGVIDHLMIFHASVGEEAGGGVLGADAIWSHRFNLGRYHVLEGTKSNVPGRFNGQFAAFDYTIQPIDAAAGVCAHEYGHDLGLPDEYDTQYTGTGEPVSYWSIMSSGSWAGKIGGTQPTAFSSWAKQFLQNSIGGRWINHEQLSINELEAKPRVVTLFQTTDNSRPNMVKVTLPMKRVEGIKPAEGEFSFYSNRGDDLKNRMSRPLTIPAGSQATLRFKAWFQIEKDYDYARVLINGKPIAGNITTMDDPFKSGLVPAISGQSDGWVDAQFDLSAWAGQTVELAFDYLTDGGLAMEGLYVDDLRLEVDGNQTLIDNAEGTSSFAFQGFTKNGGFHEANHYYLLQWRSHNDVDQGLANLKRFGQLMSFEPGLLVWYVDESYADNWVGKHPGEGWLGVVDADQNALVWSKTGEVAQTRFQVRDATFSLFDQAPLKLVTADGNTLEDMNLTANASFSDDQDYSSPQAPDSGRKVMPFGLKIDLLSQSKENEYGVVRLSKVTTENIAPVARFELKVEGLSVMSQNTSSDSDGNIVSYLWDFGNGQTSTEAAPTWSYTKAGSYSVTLTVTDDKGDSDTHQQTIKVDTPNALPQASANYIHLGRWVTMWSTSTDSDGRIVDTEWTLPNGKIKRGRMFTAIFPSYGHHDVQLKVMDDRGAVTTITIKVKL</sequence>
<proteinExistence type="evidence at protein level"/>
<comment type="function">
    <text evidence="4 5 11">Metalloprotease that exhibits a cytotoxic effect leading to cell death. In host tissues, it could play a role in pathogenesis by modulating the stability of the extracellular matrix components such as fibronectin and fibrinogen. Also able to cleave plasminogen.</text>
</comment>
<comment type="cofactor">
    <cofactor evidence="10">
        <name>Zn(2+)</name>
        <dbReference type="ChEBI" id="CHEBI:29105"/>
    </cofactor>
</comment>
<comment type="activity regulation">
    <text evidence="4">Calcium plays an important structural role, providing stability to this protein in the cytoplasm. Outside the cell, the decrease of the calcium concentration triggers the autoproteolysis. PrtV activity is increased by 25 mM of Sr(2+) or Mg(2+) and to some extent by Ba(2+); however, Ba(2+) inhibits PrtV at higher concentrations. Completely inhibited by EDTA and 1,10-phenanthroline.</text>
</comment>
<comment type="subcellular location">
    <subcellularLocation>
        <location evidence="4">Secreted</location>
    </subcellularLocation>
</comment>
<comment type="PTM">
    <text evidence="4 5">PrtV is expressed as an inactive, multidomain, 102 kDa pre-pro-metalloprotease. To form a catalytically active protease, PrtV is first secreted, and then it undergoes N- and C-terminal cleavages during envelope translocation to yield a 81 kDa pro-metalloprotease. Outside the cell, the 81 kDa pro-metalloprotease undergoes an auto-cleavage. The two major products of autoproteolysis (37 kDa and 18 kDa) together form the so called 55 kDa active complex.</text>
</comment>
<comment type="similarity">
    <text evidence="8">Belongs to the peptidase M6 family.</text>
</comment>
<reference key="1">
    <citation type="journal article" date="2000" name="Nature">
        <title>DNA sequence of both chromosomes of the cholera pathogen Vibrio cholerae.</title>
        <authorList>
            <person name="Heidelberg J.F."/>
            <person name="Eisen J.A."/>
            <person name="Nelson W.C."/>
            <person name="Clayton R.A."/>
            <person name="Gwinn M.L."/>
            <person name="Dodson R.J."/>
            <person name="Haft D.H."/>
            <person name="Hickey E.K."/>
            <person name="Peterson J.D."/>
            <person name="Umayam L.A."/>
            <person name="Gill S.R."/>
            <person name="Nelson K.E."/>
            <person name="Read T.D."/>
            <person name="Tettelin H."/>
            <person name="Richardson D.L."/>
            <person name="Ermolaeva M.D."/>
            <person name="Vamathevan J.J."/>
            <person name="Bass S."/>
            <person name="Qin H."/>
            <person name="Dragoi I."/>
            <person name="Sellers P."/>
            <person name="McDonald L.A."/>
            <person name="Utterback T.R."/>
            <person name="Fleischmann R.D."/>
            <person name="Nierman W.C."/>
            <person name="White O."/>
            <person name="Salzberg S.L."/>
            <person name="Smith H.O."/>
            <person name="Colwell R.R."/>
            <person name="Mekalanos J.J."/>
            <person name="Venter J.C."/>
            <person name="Fraser C.M."/>
        </authorList>
    </citation>
    <scope>NUCLEOTIDE SEQUENCE [LARGE SCALE GENOMIC DNA]</scope>
    <source>
        <strain>ATCC 39315 / El Tor Inaba N16961</strain>
    </source>
</reference>
<reference key="2">
    <citation type="journal article" date="1997" name="J. Bacteriol.">
        <title>Characterization of the Vibrio cholerae El Tor lipase operon lipAB and a protease gene downstream of the hly region.</title>
        <authorList>
            <person name="Ogierman M.A."/>
            <person name="Fallarino A."/>
            <person name="Riess T."/>
            <person name="Williams S.G."/>
            <person name="Attridge S.R."/>
            <person name="Manning P.A."/>
        </authorList>
    </citation>
    <scope>FUNCTION</scope>
    <scope>NOMENCLATURE</scope>
</reference>
<reference key="3">
    <citation type="journal article" date="2008" name="FEBS J.">
        <title>The metalloprotease PrtV from Vibrio cholerae.</title>
        <authorList>
            <person name="Vaitkevicius K."/>
            <person name="Rompikuntal P.K."/>
            <person name="Lindmark B."/>
            <person name="Vaitkevicius R."/>
            <person name="Song T."/>
            <person name="Wai S.N."/>
        </authorList>
    </citation>
    <scope>PROTEIN SEQUENCE OF 106-434</scope>
    <scope>FUNCTION</scope>
    <scope>ACTIVITY REGULATION</scope>
    <scope>SUBCELLULAR LOCATION</scope>
    <scope>IDENTIFICATION BY MASS SPECTROMETRY</scope>
    <scope>PROTEIN PROCESSING</scope>
</reference>
<reference key="4">
    <citation type="journal article" date="2014" name="Protein Expr. Purif.">
        <title>Domain isolation, expression, purification and proteolytic activity of the metalloprotease PrtV from Vibrio cholerae.</title>
        <authorList>
            <person name="Edwin A."/>
            <person name="Grundstroem C."/>
            <person name="Wai S.N."/>
            <person name="Ohman A."/>
            <person name="Stier G."/>
            <person name="Sauer-Eriksson A.E."/>
        </authorList>
    </citation>
    <scope>FUNCTION</scope>
    <scope>COFACTOR</scope>
    <scope>PROTEIN PROCESSING</scope>
</reference>
<reference key="5">
    <citation type="journal article" date="2015" name="Protein Sci.">
        <title>Structure of the N-terminal domain of the metalloprotease PrtV from Vibrio cholerae.</title>
        <authorList>
            <person name="Edwin A."/>
            <person name="Persson C."/>
            <person name="Mayzel M."/>
            <person name="Wai S.N."/>
            <person name="Ohman A."/>
            <person name="Karlsson B.G."/>
            <person name="Sauer-Eriksson A.E."/>
        </authorList>
    </citation>
    <scope>STRUCTURE BY NMR OF 23-103</scope>
</reference>
<evidence type="ECO:0000250" key="1">
    <source>
        <dbReference type="UniProtKB" id="C3LUP3"/>
    </source>
</evidence>
<evidence type="ECO:0000255" key="2">
    <source>
        <dbReference type="PROSITE-ProRule" id="PRU00151"/>
    </source>
</evidence>
<evidence type="ECO:0000255" key="3">
    <source>
        <dbReference type="PROSITE-ProRule" id="PRU10095"/>
    </source>
</evidence>
<evidence type="ECO:0000269" key="4">
    <source>
    </source>
</evidence>
<evidence type="ECO:0000269" key="5">
    <source>
    </source>
</evidence>
<evidence type="ECO:0000303" key="6">
    <source>
    </source>
</evidence>
<evidence type="ECO:0000303" key="7">
    <source>
    </source>
</evidence>
<evidence type="ECO:0000305" key="8"/>
<evidence type="ECO:0000305" key="9">
    <source>
    </source>
</evidence>
<evidence type="ECO:0000305" key="10">
    <source>
    </source>
</evidence>
<evidence type="ECO:0000305" key="11">
    <source>
    </source>
</evidence>
<evidence type="ECO:0000312" key="12">
    <source>
        <dbReference type="EMBL" id="AAF96135.1"/>
    </source>
</evidence>
<evidence type="ECO:0007829" key="13">
    <source>
        <dbReference type="PDB" id="5ABK"/>
    </source>
</evidence>